<keyword id="KW-0472">Membrane</keyword>
<keyword id="KW-0592">Phosphate transport</keyword>
<keyword id="KW-0597">Phosphoprotein</keyword>
<keyword id="KW-1185">Reference proteome</keyword>
<keyword id="KW-0812">Transmembrane</keyword>
<keyword id="KW-1133">Transmembrane helix</keyword>
<keyword id="KW-0813">Transport</keyword>
<proteinExistence type="evidence at protein level"/>
<evidence type="ECO:0000250" key="1"/>
<evidence type="ECO:0000255" key="2"/>
<evidence type="ECO:0000256" key="3">
    <source>
        <dbReference type="SAM" id="MobiDB-lite"/>
    </source>
</evidence>
<evidence type="ECO:0000269" key="4">
    <source>
    </source>
</evidence>
<evidence type="ECO:0000305" key="5"/>
<name>YBN1_SCHPO</name>
<organism>
    <name type="scientific">Schizosaccharomyces pombe (strain 972 / ATCC 24843)</name>
    <name type="common">Fission yeast</name>
    <dbReference type="NCBI Taxonomy" id="284812"/>
    <lineage>
        <taxon>Eukaryota</taxon>
        <taxon>Fungi</taxon>
        <taxon>Dikarya</taxon>
        <taxon>Ascomycota</taxon>
        <taxon>Taphrinomycotina</taxon>
        <taxon>Schizosaccharomycetes</taxon>
        <taxon>Schizosaccharomycetales</taxon>
        <taxon>Schizosaccharomycetaceae</taxon>
        <taxon>Schizosaccharomyces</taxon>
    </lineage>
</organism>
<sequence>MAFGSKILNIGSKSDEYNDDAVPLDQVEEGAQERRYYLGLTKREFKLMMLAGVGFFLDSYDLFIINLVTPIFEYLYWGGIEKGPTGKGHYPSGIRGLVNASANIGNIFGQLLFGFMGDFFGRKFVYGKEMVIVIIATVLVIAMPKSIHSPLSKMMWVFCWRWLLGVGIGGDYPMSAAITSERSKIKRRGTLISLIFAFQGFGTLAGAIVTIILLGCFEHPLNREGHYHKLEGVWRLQFGLALVPAIGVLIPRLIMKESKSYENSKALNSAEGKDPKAFFNTDDEDNMKKSSSHGDSEVVEASDRYANQADAADAEVDNIEKQFAAVTTPENSSGFITYFRQWRHFKHLLGTSVCWFLLDIAFYGVNLNQSVILKNIGFSTGTNEYRTLMKNAIGNLIIAVAGYVPGYWFNVFLVEILGRKWIQLQGFVITGLMFAILAGRWNEISTGGRFACFVIAQLFSNFGPNSTTFIYPAEVFPARVRGTAHGVSAALGKCGAILASLLFNFLTGVIGYGNVMWIFCGCMWGGILFTLLLPETKGRDADEIDRLELFYGKDGKVQCDSKWKSWYFNGIF</sequence>
<gene>
    <name type="ORF">SPBC8E4.01c</name>
    <name type="ORF">SPBP4G3.01</name>
</gene>
<dbReference type="EMBL" id="CU329671">
    <property type="protein sequence ID" value="CAA16994.2"/>
    <property type="molecule type" value="Genomic_DNA"/>
</dbReference>
<dbReference type="PIR" id="T50381">
    <property type="entry name" value="T39166"/>
</dbReference>
<dbReference type="PIR" id="T50404">
    <property type="entry name" value="T50404"/>
</dbReference>
<dbReference type="RefSeq" id="NP_596846.2">
    <property type="nucleotide sequence ID" value="NM_001023868.3"/>
</dbReference>
<dbReference type="SMR" id="O42885"/>
<dbReference type="BioGRID" id="277772">
    <property type="interactions" value="13"/>
</dbReference>
<dbReference type="FunCoup" id="O42885">
    <property type="interactions" value="581"/>
</dbReference>
<dbReference type="STRING" id="284812.O42885"/>
<dbReference type="iPTMnet" id="O42885"/>
<dbReference type="PaxDb" id="4896-SPBC8E4.01c.1"/>
<dbReference type="EnsemblFungi" id="SPBC8E4.01c.1">
    <property type="protein sequence ID" value="SPBC8E4.01c.1:pep"/>
    <property type="gene ID" value="SPBC8E4.01c"/>
</dbReference>
<dbReference type="GeneID" id="2541258"/>
<dbReference type="KEGG" id="spo:2541258"/>
<dbReference type="PomBase" id="SPBC8E4.01c"/>
<dbReference type="VEuPathDB" id="FungiDB:SPBC8E4.01c"/>
<dbReference type="eggNOG" id="KOG0252">
    <property type="taxonomic scope" value="Eukaryota"/>
</dbReference>
<dbReference type="HOGENOM" id="CLU_001265_46_14_1"/>
<dbReference type="InParanoid" id="O42885"/>
<dbReference type="OMA" id="VEGDHKK"/>
<dbReference type="PhylomeDB" id="O42885"/>
<dbReference type="PRO" id="PR:O42885"/>
<dbReference type="Proteomes" id="UP000002485">
    <property type="component" value="Chromosome II"/>
</dbReference>
<dbReference type="GO" id="GO:0071944">
    <property type="term" value="C:cell periphery"/>
    <property type="evidence" value="ECO:0000314"/>
    <property type="project" value="PomBase"/>
</dbReference>
<dbReference type="GO" id="GO:0000324">
    <property type="term" value="C:fungal-type vacuole"/>
    <property type="evidence" value="ECO:0000314"/>
    <property type="project" value="PomBase"/>
</dbReference>
<dbReference type="GO" id="GO:0005886">
    <property type="term" value="C:plasma membrane"/>
    <property type="evidence" value="ECO:0000266"/>
    <property type="project" value="PomBase"/>
</dbReference>
<dbReference type="GO" id="GO:0005315">
    <property type="term" value="F:phosphate transmembrane transporter activity"/>
    <property type="evidence" value="ECO:0000266"/>
    <property type="project" value="PomBase"/>
</dbReference>
<dbReference type="GO" id="GO:0006820">
    <property type="term" value="P:monoatomic anion transport"/>
    <property type="evidence" value="ECO:0000303"/>
    <property type="project" value="PomBase"/>
</dbReference>
<dbReference type="GO" id="GO:0035435">
    <property type="term" value="P:phosphate ion transmembrane transport"/>
    <property type="evidence" value="ECO:0000266"/>
    <property type="project" value="PomBase"/>
</dbReference>
<dbReference type="CDD" id="cd17364">
    <property type="entry name" value="MFS_PhT"/>
    <property type="match status" value="1"/>
</dbReference>
<dbReference type="FunFam" id="1.20.1250.20:FF:000421">
    <property type="entry name" value="Inorganic phosphate transporter"/>
    <property type="match status" value="1"/>
</dbReference>
<dbReference type="FunFam" id="1.20.1250.20:FF:000492">
    <property type="entry name" value="Probable inorganic phosphate transporter 1-5"/>
    <property type="match status" value="1"/>
</dbReference>
<dbReference type="Gene3D" id="1.20.1250.20">
    <property type="entry name" value="MFS general substrate transporter like domains"/>
    <property type="match status" value="2"/>
</dbReference>
<dbReference type="InterPro" id="IPR020846">
    <property type="entry name" value="MFS_dom"/>
</dbReference>
<dbReference type="InterPro" id="IPR005828">
    <property type="entry name" value="MFS_sugar_transport-like"/>
</dbReference>
<dbReference type="InterPro" id="IPR036259">
    <property type="entry name" value="MFS_trans_sf"/>
</dbReference>
<dbReference type="InterPro" id="IPR004738">
    <property type="entry name" value="Phos_permease"/>
</dbReference>
<dbReference type="InterPro" id="IPR005829">
    <property type="entry name" value="Sugar_transporter_CS"/>
</dbReference>
<dbReference type="NCBIfam" id="TIGR00887">
    <property type="entry name" value="2A0109"/>
    <property type="match status" value="1"/>
</dbReference>
<dbReference type="PANTHER" id="PTHR24064">
    <property type="entry name" value="SOLUTE CARRIER FAMILY 22 MEMBER"/>
    <property type="match status" value="1"/>
</dbReference>
<dbReference type="Pfam" id="PF00083">
    <property type="entry name" value="Sugar_tr"/>
    <property type="match status" value="1"/>
</dbReference>
<dbReference type="SUPFAM" id="SSF103473">
    <property type="entry name" value="MFS general substrate transporter"/>
    <property type="match status" value="1"/>
</dbReference>
<dbReference type="PROSITE" id="PS50850">
    <property type="entry name" value="MFS"/>
    <property type="match status" value="1"/>
</dbReference>
<dbReference type="PROSITE" id="PS00217">
    <property type="entry name" value="SUGAR_TRANSPORT_2"/>
    <property type="match status" value="1"/>
</dbReference>
<accession>O42885</accession>
<accession>Q9P7U8</accession>
<feature type="chain" id="PRO_0000050479" description="Putative inorganic phosphate transporter C8E4.01c">
    <location>
        <begin position="1"/>
        <end position="572"/>
    </location>
</feature>
<feature type="topological domain" description="Cytoplasmic" evidence="2">
    <location>
        <begin position="1"/>
        <end position="47"/>
    </location>
</feature>
<feature type="transmembrane region" description="Helical" evidence="2">
    <location>
        <begin position="48"/>
        <end position="68"/>
    </location>
</feature>
<feature type="topological domain" description="Extracellular" evidence="2">
    <location>
        <begin position="69"/>
        <end position="99"/>
    </location>
</feature>
<feature type="transmembrane region" description="Helical" evidence="2">
    <location>
        <begin position="100"/>
        <end position="120"/>
    </location>
</feature>
<feature type="topological domain" description="Cytoplasmic" evidence="2">
    <location>
        <begin position="121"/>
        <end position="123"/>
    </location>
</feature>
<feature type="transmembrane region" description="Helical" evidence="2">
    <location>
        <begin position="124"/>
        <end position="144"/>
    </location>
</feature>
<feature type="topological domain" description="Extracellular" evidence="2">
    <location>
        <begin position="145"/>
        <end position="153"/>
    </location>
</feature>
<feature type="transmembrane region" description="Helical" evidence="2">
    <location>
        <begin position="154"/>
        <end position="174"/>
    </location>
</feature>
<feature type="topological domain" description="Cytoplasmic" evidence="2">
    <location>
        <begin position="175"/>
        <end position="193"/>
    </location>
</feature>
<feature type="transmembrane region" description="Helical" evidence="2">
    <location>
        <begin position="194"/>
        <end position="214"/>
    </location>
</feature>
<feature type="topological domain" description="Extracellular" evidence="2">
    <location>
        <begin position="215"/>
        <end position="229"/>
    </location>
</feature>
<feature type="transmembrane region" description="Helical" evidence="2">
    <location>
        <begin position="230"/>
        <end position="250"/>
    </location>
</feature>
<feature type="topological domain" description="Cytoplasmic" evidence="2">
    <location>
        <begin position="251"/>
        <end position="346"/>
    </location>
</feature>
<feature type="transmembrane region" description="Helical" evidence="2">
    <location>
        <begin position="347"/>
        <end position="367"/>
    </location>
</feature>
<feature type="topological domain" description="Extracellular" evidence="2">
    <location>
        <begin position="368"/>
        <end position="395"/>
    </location>
</feature>
<feature type="transmembrane region" description="Helical" evidence="2">
    <location>
        <begin position="396"/>
        <end position="416"/>
    </location>
</feature>
<feature type="topological domain" description="Cytoplasmic" evidence="2">
    <location>
        <begin position="417"/>
        <end position="420"/>
    </location>
</feature>
<feature type="transmembrane region" description="Helical" evidence="2">
    <location>
        <begin position="421"/>
        <end position="441"/>
    </location>
</feature>
<feature type="topological domain" description="Extracellular" evidence="2">
    <location>
        <begin position="442"/>
        <end position="449"/>
    </location>
</feature>
<feature type="transmembrane region" description="Helical" evidence="2">
    <location>
        <begin position="450"/>
        <end position="470"/>
    </location>
</feature>
<feature type="topological domain" description="Cytoplasmic" evidence="2">
    <location>
        <begin position="471"/>
        <end position="485"/>
    </location>
</feature>
<feature type="transmembrane region" description="Helical" evidence="2">
    <location>
        <begin position="486"/>
        <end position="506"/>
    </location>
</feature>
<feature type="topological domain" description="Extracellular" evidence="2">
    <location>
        <begin position="507"/>
        <end position="508"/>
    </location>
</feature>
<feature type="transmembrane region" description="Helical" evidence="2">
    <location>
        <begin position="509"/>
        <end position="529"/>
    </location>
</feature>
<feature type="topological domain" description="Cytoplasmic" evidence="2">
    <location>
        <begin position="530"/>
        <end position="572"/>
    </location>
</feature>
<feature type="region of interest" description="Disordered" evidence="3">
    <location>
        <begin position="265"/>
        <end position="297"/>
    </location>
</feature>
<feature type="compositionally biased region" description="Basic and acidic residues" evidence="3">
    <location>
        <begin position="286"/>
        <end position="296"/>
    </location>
</feature>
<feature type="modified residue" description="Phosphoserine" evidence="4">
    <location>
        <position position="12"/>
    </location>
</feature>
<feature type="modified residue" description="Phosphoserine" evidence="4">
    <location>
        <position position="14"/>
    </location>
</feature>
<feature type="modified residue" description="Phosphoserine" evidence="4">
    <location>
        <position position="292"/>
    </location>
</feature>
<feature type="modified residue" description="Phosphoserine" evidence="4">
    <location>
        <position position="296"/>
    </location>
</feature>
<comment type="function">
    <text evidence="1">High-affinity transporter for external inorganic phosphate.</text>
</comment>
<comment type="subcellular location">
    <subcellularLocation>
        <location evidence="5">Membrane</location>
        <topology evidence="5">Multi-pass membrane protein</topology>
    </subcellularLocation>
</comment>
<comment type="similarity">
    <text evidence="5">Belongs to the major facilitator superfamily. Sugar transporter (TC 2.A.1.1) family.</text>
</comment>
<protein>
    <recommendedName>
        <fullName>Putative inorganic phosphate transporter C8E4.01c</fullName>
    </recommendedName>
</protein>
<reference key="1">
    <citation type="journal article" date="2002" name="Nature">
        <title>The genome sequence of Schizosaccharomyces pombe.</title>
        <authorList>
            <person name="Wood V."/>
            <person name="Gwilliam R."/>
            <person name="Rajandream M.A."/>
            <person name="Lyne M.H."/>
            <person name="Lyne R."/>
            <person name="Stewart A."/>
            <person name="Sgouros J.G."/>
            <person name="Peat N."/>
            <person name="Hayles J."/>
            <person name="Baker S.G."/>
            <person name="Basham D."/>
            <person name="Bowman S."/>
            <person name="Brooks K."/>
            <person name="Brown D."/>
            <person name="Brown S."/>
            <person name="Chillingworth T."/>
            <person name="Churcher C.M."/>
            <person name="Collins M."/>
            <person name="Connor R."/>
            <person name="Cronin A."/>
            <person name="Davis P."/>
            <person name="Feltwell T."/>
            <person name="Fraser A."/>
            <person name="Gentles S."/>
            <person name="Goble A."/>
            <person name="Hamlin N."/>
            <person name="Harris D.E."/>
            <person name="Hidalgo J."/>
            <person name="Hodgson G."/>
            <person name="Holroyd S."/>
            <person name="Hornsby T."/>
            <person name="Howarth S."/>
            <person name="Huckle E.J."/>
            <person name="Hunt S."/>
            <person name="Jagels K."/>
            <person name="James K.D."/>
            <person name="Jones L."/>
            <person name="Jones M."/>
            <person name="Leather S."/>
            <person name="McDonald S."/>
            <person name="McLean J."/>
            <person name="Mooney P."/>
            <person name="Moule S."/>
            <person name="Mungall K.L."/>
            <person name="Murphy L.D."/>
            <person name="Niblett D."/>
            <person name="Odell C."/>
            <person name="Oliver K."/>
            <person name="O'Neil S."/>
            <person name="Pearson D."/>
            <person name="Quail M.A."/>
            <person name="Rabbinowitsch E."/>
            <person name="Rutherford K.M."/>
            <person name="Rutter S."/>
            <person name="Saunders D."/>
            <person name="Seeger K."/>
            <person name="Sharp S."/>
            <person name="Skelton J."/>
            <person name="Simmonds M.N."/>
            <person name="Squares R."/>
            <person name="Squares S."/>
            <person name="Stevens K."/>
            <person name="Taylor K."/>
            <person name="Taylor R.G."/>
            <person name="Tivey A."/>
            <person name="Walsh S.V."/>
            <person name="Warren T."/>
            <person name="Whitehead S."/>
            <person name="Woodward J.R."/>
            <person name="Volckaert G."/>
            <person name="Aert R."/>
            <person name="Robben J."/>
            <person name="Grymonprez B."/>
            <person name="Weltjens I."/>
            <person name="Vanstreels E."/>
            <person name="Rieger M."/>
            <person name="Schaefer M."/>
            <person name="Mueller-Auer S."/>
            <person name="Gabel C."/>
            <person name="Fuchs M."/>
            <person name="Duesterhoeft A."/>
            <person name="Fritzc C."/>
            <person name="Holzer E."/>
            <person name="Moestl D."/>
            <person name="Hilbert H."/>
            <person name="Borzym K."/>
            <person name="Langer I."/>
            <person name="Beck A."/>
            <person name="Lehrach H."/>
            <person name="Reinhardt R."/>
            <person name="Pohl T.M."/>
            <person name="Eger P."/>
            <person name="Zimmermann W."/>
            <person name="Wedler H."/>
            <person name="Wambutt R."/>
            <person name="Purnelle B."/>
            <person name="Goffeau A."/>
            <person name="Cadieu E."/>
            <person name="Dreano S."/>
            <person name="Gloux S."/>
            <person name="Lelaure V."/>
            <person name="Mottier S."/>
            <person name="Galibert F."/>
            <person name="Aves S.J."/>
            <person name="Xiang Z."/>
            <person name="Hunt C."/>
            <person name="Moore K."/>
            <person name="Hurst S.M."/>
            <person name="Lucas M."/>
            <person name="Rochet M."/>
            <person name="Gaillardin C."/>
            <person name="Tallada V.A."/>
            <person name="Garzon A."/>
            <person name="Thode G."/>
            <person name="Daga R.R."/>
            <person name="Cruzado L."/>
            <person name="Jimenez J."/>
            <person name="Sanchez M."/>
            <person name="del Rey F."/>
            <person name="Benito J."/>
            <person name="Dominguez A."/>
            <person name="Revuelta J.L."/>
            <person name="Moreno S."/>
            <person name="Armstrong J."/>
            <person name="Forsburg S.L."/>
            <person name="Cerutti L."/>
            <person name="Lowe T."/>
            <person name="McCombie W.R."/>
            <person name="Paulsen I."/>
            <person name="Potashkin J."/>
            <person name="Shpakovski G.V."/>
            <person name="Ussery D."/>
            <person name="Barrell B.G."/>
            <person name="Nurse P."/>
        </authorList>
    </citation>
    <scope>NUCLEOTIDE SEQUENCE [LARGE SCALE GENOMIC DNA]</scope>
    <source>
        <strain>972 / ATCC 24843</strain>
    </source>
</reference>
<reference key="2">
    <citation type="journal article" date="2008" name="J. Proteome Res.">
        <title>Phosphoproteome analysis of fission yeast.</title>
        <authorList>
            <person name="Wilson-Grady J.T."/>
            <person name="Villen J."/>
            <person name="Gygi S.P."/>
        </authorList>
    </citation>
    <scope>PHOSPHORYLATION [LARGE SCALE ANALYSIS] AT SER-12; SER-14; SER-292 AND SER-296</scope>
    <scope>IDENTIFICATION BY MASS SPECTROMETRY</scope>
</reference>